<sequence length="496" mass="58331">MFESAEVGHSIDKDTYEKAVIELREALLEAQFELKQQARFPVIILINGIEGAGKGETVKLLNEWMDPRLIEVQSFLRPSDEELERPPQWRFWRRLPPKGRTGIFFGNWYSQMLYARVEGHIKEAKLDQAIDAAERFERMLCDEGALLFKFWFHLSKKQLKERLKALEKDPQHSWKLSPLDWKQSEVYDRFVHYGERVLRRTSRDYAPWYVVEGADERYRALTVGRILLEGLQAALATKERAKRQPHAAPLVSSLDNRGLLDSLDLGQYLDKDAYKEQLAAEQARLAGLIRDKRFRQHSLVAVFEGNDAAGKGGAIRRVTDALDPRQYHIVPIAAPTEEERAQPYLWRFWRHIPARRQFTIFDRSWYGRVLVERIEGFCAPADWLRAYGEINDFEEQLSEYGIIVVKFWLAIDKQTQMERFKEREKTPYKRYKITEEDWRNRDKWDQYVDAVGDMVDRTSTEIAPWTLVEANDKRFARVKVLRTINDAIEAAYKKDK</sequence>
<evidence type="ECO:0000250" key="1">
    <source>
        <dbReference type="UniProtKB" id="Q83XD3"/>
    </source>
</evidence>
<evidence type="ECO:0000269" key="2">
    <source>
    </source>
</evidence>
<evidence type="ECO:0000305" key="3"/>
<evidence type="ECO:0000312" key="4">
    <source>
        <dbReference type="EMBL" id="AAG06843.1"/>
    </source>
</evidence>
<evidence type="ECO:0007744" key="5">
    <source>
        <dbReference type="PDB" id="3CZP"/>
    </source>
</evidence>
<evidence type="ECO:0007829" key="6">
    <source>
        <dbReference type="PDB" id="3CZP"/>
    </source>
</evidence>
<proteinExistence type="evidence at protein level"/>
<accession>Q9HYF1</accession>
<dbReference type="EC" id="2.7.4.33" evidence="2"/>
<dbReference type="EMBL" id="AE004091">
    <property type="protein sequence ID" value="AAG06843.1"/>
    <property type="molecule type" value="Genomic_DNA"/>
</dbReference>
<dbReference type="PIR" id="F83213">
    <property type="entry name" value="F83213"/>
</dbReference>
<dbReference type="RefSeq" id="NP_252145.1">
    <property type="nucleotide sequence ID" value="NC_002516.2"/>
</dbReference>
<dbReference type="PDB" id="3CZP">
    <property type="method" value="X-ray"/>
    <property type="resolution" value="2.00 A"/>
    <property type="chains" value="A/B=1-496"/>
</dbReference>
<dbReference type="PDBsum" id="3CZP"/>
<dbReference type="SMR" id="Q9HYF1"/>
<dbReference type="DIP" id="DIP-48618N"/>
<dbReference type="STRING" id="208964.PA3455"/>
<dbReference type="PaxDb" id="208964-PA3455"/>
<dbReference type="GeneID" id="878853"/>
<dbReference type="KEGG" id="pae:PA3455"/>
<dbReference type="PATRIC" id="fig|208964.12.peg.3617"/>
<dbReference type="PseudoCAP" id="PA3455"/>
<dbReference type="HOGENOM" id="CLU_033786_1_2_6"/>
<dbReference type="InParanoid" id="Q9HYF1"/>
<dbReference type="OrthoDB" id="9775224at2"/>
<dbReference type="PhylomeDB" id="Q9HYF1"/>
<dbReference type="BioCyc" id="PAER208964:G1FZ6-3523-MONOMER"/>
<dbReference type="BRENDA" id="2.7.4.33">
    <property type="organism ID" value="5087"/>
</dbReference>
<dbReference type="EvolutionaryTrace" id="Q9HYF1"/>
<dbReference type="Proteomes" id="UP000002438">
    <property type="component" value="Chromosome"/>
</dbReference>
<dbReference type="GO" id="GO:0042802">
    <property type="term" value="F:identical protein binding"/>
    <property type="evidence" value="ECO:0000353"/>
    <property type="project" value="IntAct"/>
</dbReference>
<dbReference type="GO" id="GO:0016301">
    <property type="term" value="F:kinase activity"/>
    <property type="evidence" value="ECO:0007669"/>
    <property type="project" value="UniProtKB-KW"/>
</dbReference>
<dbReference type="GO" id="GO:0043751">
    <property type="term" value="F:polyphosphate:AMP phosphotransferase activity"/>
    <property type="evidence" value="ECO:0007669"/>
    <property type="project" value="InterPro"/>
</dbReference>
<dbReference type="GO" id="GO:0006797">
    <property type="term" value="P:polyphosphate metabolic process"/>
    <property type="evidence" value="ECO:0007669"/>
    <property type="project" value="InterPro"/>
</dbReference>
<dbReference type="Gene3D" id="3.40.50.300">
    <property type="entry name" value="P-loop containing nucleotide triphosphate hydrolases"/>
    <property type="match status" value="2"/>
</dbReference>
<dbReference type="InterPro" id="IPR027417">
    <property type="entry name" value="P-loop_NTPase"/>
</dbReference>
<dbReference type="InterPro" id="IPR022489">
    <property type="entry name" value="PolyP_AMP_Tfrase"/>
</dbReference>
<dbReference type="InterPro" id="IPR022488">
    <property type="entry name" value="PPK2-related"/>
</dbReference>
<dbReference type="NCBIfam" id="TIGR03708">
    <property type="entry name" value="poly_P_AMP_trns"/>
    <property type="match status" value="1"/>
</dbReference>
<dbReference type="PANTHER" id="PTHR34383:SF3">
    <property type="entry name" value="POLYPHOSPHATE:AMP PHOSPHOTRANSFERASE"/>
    <property type="match status" value="1"/>
</dbReference>
<dbReference type="PANTHER" id="PTHR34383">
    <property type="entry name" value="POLYPHOSPHATE:AMP PHOSPHOTRANSFERASE-RELATED"/>
    <property type="match status" value="1"/>
</dbReference>
<dbReference type="Pfam" id="PF03976">
    <property type="entry name" value="PPK2"/>
    <property type="match status" value="2"/>
</dbReference>
<dbReference type="SUPFAM" id="SSF52540">
    <property type="entry name" value="P-loop containing nucleoside triphosphate hydrolases"/>
    <property type="match status" value="2"/>
</dbReference>
<protein>
    <recommendedName>
        <fullName evidence="3">Polyphosphate:AMP phosphotransferase</fullName>
        <shortName evidence="1">PAP</shortName>
        <ecNumber evidence="2">2.7.4.33</ecNumber>
    </recommendedName>
    <alternativeName>
        <fullName evidence="3">Polyphosphate kinase PPK2 3</fullName>
    </alternativeName>
</protein>
<organism>
    <name type="scientific">Pseudomonas aeruginosa (strain ATCC 15692 / DSM 22644 / CIP 104116 / JCM 14847 / LMG 12228 / 1C / PRS 101 / PAO1)</name>
    <dbReference type="NCBI Taxonomy" id="208964"/>
    <lineage>
        <taxon>Bacteria</taxon>
        <taxon>Pseudomonadati</taxon>
        <taxon>Pseudomonadota</taxon>
        <taxon>Gammaproteobacteria</taxon>
        <taxon>Pseudomonadales</taxon>
        <taxon>Pseudomonadaceae</taxon>
        <taxon>Pseudomonas</taxon>
    </lineage>
</organism>
<keyword id="KW-0002">3D-structure</keyword>
<keyword id="KW-0418">Kinase</keyword>
<keyword id="KW-0460">Magnesium</keyword>
<keyword id="KW-1185">Reference proteome</keyword>
<keyword id="KW-0677">Repeat</keyword>
<keyword id="KW-0808">Transferase</keyword>
<reference key="1">
    <citation type="journal article" date="2000" name="Nature">
        <title>Complete genome sequence of Pseudomonas aeruginosa PAO1, an opportunistic pathogen.</title>
        <authorList>
            <person name="Stover C.K."/>
            <person name="Pham X.-Q.T."/>
            <person name="Erwin A.L."/>
            <person name="Mizoguchi S.D."/>
            <person name="Warrener P."/>
            <person name="Hickey M.J."/>
            <person name="Brinkman F.S.L."/>
            <person name="Hufnagle W.O."/>
            <person name="Kowalik D.J."/>
            <person name="Lagrou M."/>
            <person name="Garber R.L."/>
            <person name="Goltry L."/>
            <person name="Tolentino E."/>
            <person name="Westbrock-Wadman S."/>
            <person name="Yuan Y."/>
            <person name="Brody L.L."/>
            <person name="Coulter S.N."/>
            <person name="Folger K.R."/>
            <person name="Kas A."/>
            <person name="Larbig K."/>
            <person name="Lim R.M."/>
            <person name="Smith K.A."/>
            <person name="Spencer D.H."/>
            <person name="Wong G.K.-S."/>
            <person name="Wu Z."/>
            <person name="Paulsen I.T."/>
            <person name="Reizer J."/>
            <person name="Saier M.H. Jr."/>
            <person name="Hancock R.E.W."/>
            <person name="Lory S."/>
            <person name="Olson M.V."/>
        </authorList>
    </citation>
    <scope>NUCLEOTIDE SEQUENCE [LARGE SCALE GENOMIC DNA]</scope>
    <source>
        <strain>ATCC 15692 / DSM 22644 / CIP 104116 / JCM 14847 / LMG 12228 / 1C / PRS 101 / PAO1</strain>
    </source>
</reference>
<reference evidence="5" key="2">
    <citation type="journal article" date="2008" name="Proc. Natl. Acad. Sci. U.S.A.">
        <title>Polyphosphate-dependent synthesis of ATP and ADP by the family-2 polyphosphate kinases in bacteria.</title>
        <authorList>
            <person name="Nocek B."/>
            <person name="Kochinyan S."/>
            <person name="Proudfoot M."/>
            <person name="Brown G."/>
            <person name="Evdokimova E."/>
            <person name="Osipiuk J."/>
            <person name="Edwards A.M."/>
            <person name="Savchenko A."/>
            <person name="Joachimiak A."/>
            <person name="Yakunin A.F."/>
        </authorList>
    </citation>
    <scope>X-RAY CRYSTALLOGRAPHY (2.00 ANGSTROMS)</scope>
    <scope>FUNCTION</scope>
    <scope>CATALYTIC ACTIVITY</scope>
    <scope>COFACTOR</scope>
    <scope>BIOPHYSICOCHEMICAL PROPERTIES</scope>
    <scope>SUBUNIT</scope>
    <scope>DOMAIN</scope>
    <scope>MUTAGENESIS OF GLU-304; ASP-307; LYS-311; ARG-316; ASP-320; ASP-323; ARG-325; ASP-362; ARG-363; TRP-408; GLN-416; ARG-419; ARG-423; ASP-437; TYR-447; LYS-473 AND ARG-477</scope>
</reference>
<feature type="chain" id="PRO_0000442597" description="Polyphosphate:AMP phosphotransferase">
    <location>
        <begin position="1"/>
        <end position="496"/>
    </location>
</feature>
<feature type="region of interest" description="PPK2 1" evidence="3">
    <location>
        <begin position="11"/>
        <end position="234"/>
    </location>
</feature>
<feature type="region of interest" description="PPK2 2" evidence="3">
    <location>
        <begin position="269"/>
        <end position="495"/>
    </location>
</feature>
<feature type="mutagenesis site" description="Strong decrease in activity." evidence="2">
    <original>E</original>
    <variation>A</variation>
    <location>
        <position position="304"/>
    </location>
</feature>
<feature type="mutagenesis site" description="Almost loss of activity." evidence="2">
    <original>D</original>
    <variation>A</variation>
    <location>
        <position position="307"/>
    </location>
</feature>
<feature type="mutagenesis site" description="Almost loss of activity." evidence="2">
    <original>K</original>
    <variation>A</variation>
    <location>
        <position position="311"/>
    </location>
</feature>
<feature type="mutagenesis site" description="Almost no change in activity." evidence="2">
    <original>R</original>
    <variation>A</variation>
    <location>
        <position position="316"/>
    </location>
</feature>
<feature type="mutagenesis site" description="Almost no change in activity." evidence="2">
    <original>D</original>
    <variation>A</variation>
    <location>
        <position position="320"/>
    </location>
</feature>
<feature type="mutagenesis site" description="Almost no change in activity." evidence="2">
    <original>D</original>
    <variation>A</variation>
    <location>
        <position position="323"/>
    </location>
</feature>
<feature type="mutagenesis site" description="Almost no change in activity." evidence="2">
    <original>R</original>
    <variation>A</variation>
    <location>
        <position position="325"/>
    </location>
</feature>
<feature type="mutagenesis site" description="Loss of activity." evidence="2">
    <original>D</original>
    <variation>A</variation>
    <location>
        <position position="362"/>
    </location>
</feature>
<feature type="mutagenesis site" description="Loss of activity." evidence="2">
    <original>R</original>
    <variation>A</variation>
    <location>
        <position position="363"/>
    </location>
</feature>
<feature type="mutagenesis site" description="Almost loss of activity." evidence="2">
    <original>W</original>
    <variation>A</variation>
    <location>
        <position position="408"/>
    </location>
</feature>
<feature type="mutagenesis site" description="Strong decrease in activity." evidence="2">
    <original>Q</original>
    <variation>A</variation>
    <location>
        <position position="416"/>
    </location>
</feature>
<feature type="mutagenesis site" description="Loss of activity." evidence="2">
    <original>R</original>
    <variation>A</variation>
    <location>
        <position position="419"/>
    </location>
</feature>
<feature type="mutagenesis site" description="Almost loss of activity." evidence="2">
    <original>R</original>
    <variation>A</variation>
    <location>
        <position position="423"/>
    </location>
</feature>
<feature type="mutagenesis site" description="Loss of activity." evidence="2">
    <original>D</original>
    <variation>A</variation>
    <location>
        <position position="437"/>
    </location>
</feature>
<feature type="mutagenesis site" description="Strong decrease in activity." evidence="2">
    <original>Y</original>
    <variation>A</variation>
    <location>
        <position position="447"/>
    </location>
</feature>
<feature type="mutagenesis site" description="Almost no change in activity." evidence="2">
    <original>K</original>
    <variation>A</variation>
    <location>
        <position position="473"/>
    </location>
</feature>
<feature type="mutagenesis site" description="Almost no change in activity." evidence="2">
    <original>R</original>
    <variation>A</variation>
    <location>
        <position position="477"/>
    </location>
</feature>
<feature type="helix" evidence="6">
    <location>
        <begin position="2"/>
        <end position="6"/>
    </location>
</feature>
<feature type="helix" evidence="6">
    <location>
        <begin position="13"/>
        <end position="37"/>
    </location>
</feature>
<feature type="strand" evidence="6">
    <location>
        <begin position="42"/>
        <end position="48"/>
    </location>
</feature>
<feature type="helix" evidence="6">
    <location>
        <begin position="54"/>
        <end position="64"/>
    </location>
</feature>
<feature type="helix" evidence="6">
    <location>
        <begin position="67"/>
        <end position="69"/>
    </location>
</feature>
<feature type="strand" evidence="6">
    <location>
        <begin position="70"/>
        <end position="74"/>
    </location>
</feature>
<feature type="helix" evidence="6">
    <location>
        <begin position="80"/>
        <end position="83"/>
    </location>
</feature>
<feature type="helix" evidence="6">
    <location>
        <begin position="89"/>
        <end position="94"/>
    </location>
</feature>
<feature type="strand" evidence="6">
    <location>
        <begin position="101"/>
        <end position="106"/>
    </location>
</feature>
<feature type="helix" evidence="6">
    <location>
        <begin position="108"/>
        <end position="117"/>
    </location>
</feature>
<feature type="helix" evidence="6">
    <location>
        <begin position="123"/>
        <end position="142"/>
    </location>
</feature>
<feature type="strand" evidence="6">
    <location>
        <begin position="146"/>
        <end position="153"/>
    </location>
</feature>
<feature type="helix" evidence="6">
    <location>
        <begin position="156"/>
        <end position="161"/>
    </location>
</feature>
<feature type="helix" evidence="6">
    <location>
        <begin position="184"/>
        <end position="201"/>
    </location>
</feature>
<feature type="strand" evidence="6">
    <location>
        <begin position="208"/>
        <end position="212"/>
    </location>
</feature>
<feature type="helix" evidence="6">
    <location>
        <begin position="216"/>
        <end position="236"/>
    </location>
</feature>
<feature type="helix" evidence="6">
    <location>
        <begin position="258"/>
        <end position="261"/>
    </location>
</feature>
<feature type="helix" evidence="6">
    <location>
        <begin position="271"/>
        <end position="290"/>
    </location>
</feature>
<feature type="helix" evidence="6">
    <location>
        <begin position="292"/>
        <end position="296"/>
    </location>
</feature>
<feature type="strand" evidence="6">
    <location>
        <begin position="298"/>
        <end position="306"/>
    </location>
</feature>
<feature type="helix" evidence="6">
    <location>
        <begin position="311"/>
        <end position="319"/>
    </location>
</feature>
<feature type="helix" evidence="6">
    <location>
        <begin position="324"/>
        <end position="326"/>
    </location>
</feature>
<feature type="strand" evidence="6">
    <location>
        <begin position="328"/>
        <end position="331"/>
    </location>
</feature>
<feature type="helix" evidence="6">
    <location>
        <begin position="337"/>
        <end position="340"/>
    </location>
</feature>
<feature type="helix" evidence="6">
    <location>
        <begin position="346"/>
        <end position="349"/>
    </location>
</feature>
<feature type="strand" evidence="6">
    <location>
        <begin position="358"/>
        <end position="363"/>
    </location>
</feature>
<feature type="helix" evidence="6">
    <location>
        <begin position="365"/>
        <end position="369"/>
    </location>
</feature>
<feature type="helix" evidence="6">
    <location>
        <begin position="371"/>
        <end position="375"/>
    </location>
</feature>
<feature type="helix" evidence="6">
    <location>
        <begin position="380"/>
        <end position="399"/>
    </location>
</feature>
<feature type="strand" evidence="6">
    <location>
        <begin position="402"/>
        <end position="410"/>
    </location>
</feature>
<feature type="helix" evidence="6">
    <location>
        <begin position="413"/>
        <end position="425"/>
    </location>
</feature>
<feature type="turn" evidence="6">
    <location>
        <begin position="437"/>
        <end position="439"/>
    </location>
</feature>
<feature type="helix" evidence="6">
    <location>
        <begin position="440"/>
        <end position="443"/>
    </location>
</feature>
<feature type="helix" evidence="6">
    <location>
        <begin position="444"/>
        <end position="458"/>
    </location>
</feature>
<feature type="strand" evidence="6">
    <location>
        <begin position="461"/>
        <end position="463"/>
    </location>
</feature>
<feature type="strand" evidence="6">
    <location>
        <begin position="465"/>
        <end position="469"/>
    </location>
</feature>
<feature type="helix" evidence="6">
    <location>
        <begin position="473"/>
        <end position="494"/>
    </location>
</feature>
<name>PK22_PSEAE</name>
<comment type="function">
    <text evidence="2">Uses inorganic polyphosphate (polyP) as a donor to convert AMP to ADP. Can also convert GMP to GDP, with lower efficiency. Cannot dephosphorylate ADP in the presence of polyP.</text>
</comment>
<comment type="catalytic activity">
    <reaction evidence="2">
        <text>[phosphate](n) + ADP = [phosphate](n+1) + AMP</text>
        <dbReference type="Rhea" id="RHEA:57820"/>
        <dbReference type="Rhea" id="RHEA-COMP:9859"/>
        <dbReference type="Rhea" id="RHEA-COMP:14280"/>
        <dbReference type="ChEBI" id="CHEBI:16838"/>
        <dbReference type="ChEBI" id="CHEBI:456215"/>
        <dbReference type="ChEBI" id="CHEBI:456216"/>
        <dbReference type="EC" id="2.7.4.33"/>
    </reaction>
</comment>
<comment type="cofactor">
    <cofactor evidence="2">
        <name>Mg(2+)</name>
        <dbReference type="ChEBI" id="CHEBI:18420"/>
    </cofactor>
    <text evidence="2">Has low activity with Co(2+) or Ni(2+).</text>
</comment>
<comment type="biophysicochemical properties">
    <phDependence>
        <text evidence="2">Optimum pH is 8.0-9.5.</text>
    </phDependence>
</comment>
<comment type="subunit">
    <text evidence="2">Homodimer.</text>
</comment>
<comment type="interaction">
    <interactant intactId="EBI-15739712">
        <id>Q9HYF1</id>
    </interactant>
    <interactant intactId="EBI-15739712">
        <id>Q9HYF1</id>
        <label>PA3455</label>
    </interactant>
    <organismsDiffer>false</organismsDiffer>
    <experiments>2</experiments>
</comment>
<comment type="domain">
    <text evidence="2">Contains 2 fused PPK2 domains. The N-terminal domain seems to be catalytically inactive and might be responsible for the protein dimerization.</text>
</comment>
<comment type="similarity">
    <text evidence="3">Belongs to the polyphosphate kinase 2 (PPK2) family. Class II subfamily.</text>
</comment>
<gene>
    <name evidence="4" type="ordered locus">PA3455</name>
</gene>